<accession>A5VNK4</accession>
<reference key="1">
    <citation type="journal article" date="2009" name="PLoS ONE">
        <title>Genome degradation in Brucella ovis corresponds with narrowing of its host range and tissue tropism.</title>
        <authorList>
            <person name="Tsolis R.M."/>
            <person name="Seshadri R."/>
            <person name="Santos R.L."/>
            <person name="Sangari F.J."/>
            <person name="Lobo J.M."/>
            <person name="de Jong M.F."/>
            <person name="Ren Q."/>
            <person name="Myers G."/>
            <person name="Brinkac L.M."/>
            <person name="Nelson W.C."/>
            <person name="Deboy R.T."/>
            <person name="Angiuoli S."/>
            <person name="Khouri H."/>
            <person name="Dimitrov G."/>
            <person name="Robinson J.R."/>
            <person name="Mulligan S."/>
            <person name="Walker R.L."/>
            <person name="Elzer P.E."/>
            <person name="Hassan K.A."/>
            <person name="Paulsen I.T."/>
        </authorList>
    </citation>
    <scope>NUCLEOTIDE SEQUENCE [LARGE SCALE GENOMIC DNA]</scope>
    <source>
        <strain>ATCC 25840 / 63/290 / NCTC 10512</strain>
    </source>
</reference>
<comment type="function">
    <text evidence="1">Cell wall formation. Adds enolpyruvyl to UDP-N-acetylglucosamine.</text>
</comment>
<comment type="catalytic activity">
    <reaction evidence="1">
        <text>phosphoenolpyruvate + UDP-N-acetyl-alpha-D-glucosamine = UDP-N-acetyl-3-O-(1-carboxyvinyl)-alpha-D-glucosamine + phosphate</text>
        <dbReference type="Rhea" id="RHEA:18681"/>
        <dbReference type="ChEBI" id="CHEBI:43474"/>
        <dbReference type="ChEBI" id="CHEBI:57705"/>
        <dbReference type="ChEBI" id="CHEBI:58702"/>
        <dbReference type="ChEBI" id="CHEBI:68483"/>
        <dbReference type="EC" id="2.5.1.7"/>
    </reaction>
</comment>
<comment type="pathway">
    <text evidence="1">Cell wall biogenesis; peptidoglycan biosynthesis.</text>
</comment>
<comment type="subcellular location">
    <subcellularLocation>
        <location evidence="1">Cytoplasm</location>
    </subcellularLocation>
</comment>
<comment type="similarity">
    <text evidence="1">Belongs to the EPSP synthase family. MurA subfamily.</text>
</comment>
<feature type="chain" id="PRO_1000023022" description="UDP-N-acetylglucosamine 1-carboxyvinyltransferase">
    <location>
        <begin position="1"/>
        <end position="429"/>
    </location>
</feature>
<feature type="active site" description="Proton donor" evidence="1">
    <location>
        <position position="126"/>
    </location>
</feature>
<feature type="binding site" evidence="1">
    <location>
        <begin position="22"/>
        <end position="23"/>
    </location>
    <ligand>
        <name>phosphoenolpyruvate</name>
        <dbReference type="ChEBI" id="CHEBI:58702"/>
    </ligand>
</feature>
<feature type="binding site" evidence="1">
    <location>
        <position position="102"/>
    </location>
    <ligand>
        <name>UDP-N-acetyl-alpha-D-glucosamine</name>
        <dbReference type="ChEBI" id="CHEBI:57705"/>
    </ligand>
</feature>
<feature type="binding site" evidence="1">
    <location>
        <begin position="131"/>
        <end position="135"/>
    </location>
    <ligand>
        <name>UDP-N-acetyl-alpha-D-glucosamine</name>
        <dbReference type="ChEBI" id="CHEBI:57705"/>
    </ligand>
</feature>
<feature type="binding site" evidence="1">
    <location>
        <begin position="171"/>
        <end position="174"/>
    </location>
    <ligand>
        <name>UDP-N-acetyl-alpha-D-glucosamine</name>
        <dbReference type="ChEBI" id="CHEBI:57705"/>
    </ligand>
</feature>
<feature type="binding site" evidence="1">
    <location>
        <position position="316"/>
    </location>
    <ligand>
        <name>UDP-N-acetyl-alpha-D-glucosamine</name>
        <dbReference type="ChEBI" id="CHEBI:57705"/>
    </ligand>
</feature>
<feature type="binding site" evidence="1">
    <location>
        <position position="338"/>
    </location>
    <ligand>
        <name>UDP-N-acetyl-alpha-D-glucosamine</name>
        <dbReference type="ChEBI" id="CHEBI:57705"/>
    </ligand>
</feature>
<feature type="modified residue" description="2-(S-cysteinyl)pyruvic acid O-phosphothioketal" evidence="1">
    <location>
        <position position="126"/>
    </location>
</feature>
<evidence type="ECO:0000255" key="1">
    <source>
        <dbReference type="HAMAP-Rule" id="MF_00111"/>
    </source>
</evidence>
<gene>
    <name evidence="1" type="primary">murA</name>
    <name type="ordered locus">BOV_0272</name>
</gene>
<name>MURA_BRUO2</name>
<dbReference type="EC" id="2.5.1.7" evidence="1"/>
<dbReference type="EMBL" id="CP000708">
    <property type="protein sequence ID" value="ABQ60706.1"/>
    <property type="molecule type" value="Genomic_DNA"/>
</dbReference>
<dbReference type="RefSeq" id="WP_002965536.1">
    <property type="nucleotide sequence ID" value="NC_009505.1"/>
</dbReference>
<dbReference type="SMR" id="A5VNK4"/>
<dbReference type="GeneID" id="97534345"/>
<dbReference type="KEGG" id="bov:BOV_0272"/>
<dbReference type="HOGENOM" id="CLU_027387_0_0_5"/>
<dbReference type="UniPathway" id="UPA00219"/>
<dbReference type="Proteomes" id="UP000006383">
    <property type="component" value="Chromosome I"/>
</dbReference>
<dbReference type="GO" id="GO:0005737">
    <property type="term" value="C:cytoplasm"/>
    <property type="evidence" value="ECO:0007669"/>
    <property type="project" value="UniProtKB-SubCell"/>
</dbReference>
<dbReference type="GO" id="GO:0008760">
    <property type="term" value="F:UDP-N-acetylglucosamine 1-carboxyvinyltransferase activity"/>
    <property type="evidence" value="ECO:0007669"/>
    <property type="project" value="UniProtKB-UniRule"/>
</dbReference>
<dbReference type="GO" id="GO:0051301">
    <property type="term" value="P:cell division"/>
    <property type="evidence" value="ECO:0007669"/>
    <property type="project" value="UniProtKB-KW"/>
</dbReference>
<dbReference type="GO" id="GO:0071555">
    <property type="term" value="P:cell wall organization"/>
    <property type="evidence" value="ECO:0007669"/>
    <property type="project" value="UniProtKB-KW"/>
</dbReference>
<dbReference type="GO" id="GO:0009252">
    <property type="term" value="P:peptidoglycan biosynthetic process"/>
    <property type="evidence" value="ECO:0007669"/>
    <property type="project" value="UniProtKB-UniRule"/>
</dbReference>
<dbReference type="GO" id="GO:0008360">
    <property type="term" value="P:regulation of cell shape"/>
    <property type="evidence" value="ECO:0007669"/>
    <property type="project" value="UniProtKB-KW"/>
</dbReference>
<dbReference type="GO" id="GO:0019277">
    <property type="term" value="P:UDP-N-acetylgalactosamine biosynthetic process"/>
    <property type="evidence" value="ECO:0007669"/>
    <property type="project" value="InterPro"/>
</dbReference>
<dbReference type="CDD" id="cd01555">
    <property type="entry name" value="UdpNAET"/>
    <property type="match status" value="1"/>
</dbReference>
<dbReference type="FunFam" id="3.65.10.10:FF:000001">
    <property type="entry name" value="UDP-N-acetylglucosamine 1-carboxyvinyltransferase"/>
    <property type="match status" value="1"/>
</dbReference>
<dbReference type="Gene3D" id="3.65.10.10">
    <property type="entry name" value="Enolpyruvate transferase domain"/>
    <property type="match status" value="2"/>
</dbReference>
<dbReference type="HAMAP" id="MF_00111">
    <property type="entry name" value="MurA"/>
    <property type="match status" value="1"/>
</dbReference>
<dbReference type="InterPro" id="IPR001986">
    <property type="entry name" value="Enolpyruvate_Tfrase_dom"/>
</dbReference>
<dbReference type="InterPro" id="IPR036968">
    <property type="entry name" value="Enolpyruvate_Tfrase_sf"/>
</dbReference>
<dbReference type="InterPro" id="IPR050068">
    <property type="entry name" value="MurA_subfamily"/>
</dbReference>
<dbReference type="InterPro" id="IPR013792">
    <property type="entry name" value="RNA3'P_cycl/enolpyr_Trfase_a/b"/>
</dbReference>
<dbReference type="InterPro" id="IPR005750">
    <property type="entry name" value="UDP_GlcNAc_COvinyl_MurA"/>
</dbReference>
<dbReference type="NCBIfam" id="TIGR01072">
    <property type="entry name" value="murA"/>
    <property type="match status" value="1"/>
</dbReference>
<dbReference type="NCBIfam" id="NF006873">
    <property type="entry name" value="PRK09369.1"/>
    <property type="match status" value="1"/>
</dbReference>
<dbReference type="PANTHER" id="PTHR43783">
    <property type="entry name" value="UDP-N-ACETYLGLUCOSAMINE 1-CARBOXYVINYLTRANSFERASE"/>
    <property type="match status" value="1"/>
</dbReference>
<dbReference type="PANTHER" id="PTHR43783:SF1">
    <property type="entry name" value="UDP-N-ACETYLGLUCOSAMINE 1-CARBOXYVINYLTRANSFERASE"/>
    <property type="match status" value="1"/>
</dbReference>
<dbReference type="Pfam" id="PF00275">
    <property type="entry name" value="EPSP_synthase"/>
    <property type="match status" value="1"/>
</dbReference>
<dbReference type="SUPFAM" id="SSF55205">
    <property type="entry name" value="EPT/RTPC-like"/>
    <property type="match status" value="1"/>
</dbReference>
<keyword id="KW-0131">Cell cycle</keyword>
<keyword id="KW-0132">Cell division</keyword>
<keyword id="KW-0133">Cell shape</keyword>
<keyword id="KW-0961">Cell wall biogenesis/degradation</keyword>
<keyword id="KW-0963">Cytoplasm</keyword>
<keyword id="KW-0573">Peptidoglycan synthesis</keyword>
<keyword id="KW-0670">Pyruvate</keyword>
<keyword id="KW-0808">Transferase</keyword>
<organism>
    <name type="scientific">Brucella ovis (strain ATCC 25840 / 63/290 / NCTC 10512)</name>
    <dbReference type="NCBI Taxonomy" id="444178"/>
    <lineage>
        <taxon>Bacteria</taxon>
        <taxon>Pseudomonadati</taxon>
        <taxon>Pseudomonadota</taxon>
        <taxon>Alphaproteobacteria</taxon>
        <taxon>Hyphomicrobiales</taxon>
        <taxon>Brucellaceae</taxon>
        <taxon>Brucella/Ochrobactrum group</taxon>
        <taxon>Brucella</taxon>
    </lineage>
</organism>
<proteinExistence type="inferred from homology"/>
<protein>
    <recommendedName>
        <fullName evidence="1">UDP-N-acetylglucosamine 1-carboxyvinyltransferase</fullName>
        <ecNumber evidence="1">2.5.1.7</ecNumber>
    </recommendedName>
    <alternativeName>
        <fullName evidence="1">Enoylpyruvate transferase</fullName>
    </alternativeName>
    <alternativeName>
        <fullName evidence="1">UDP-N-acetylglucosamine enolpyruvyl transferase</fullName>
        <shortName evidence="1">EPT</shortName>
    </alternativeName>
</protein>
<sequence length="429" mass="45719">MDRIKIVGGNKLNGVIPISGAKNAALPLMIASLLTDDTLTLENVPHLADVEQLIRILSNHGVDYSVNGRREHQNGPYSRTIHFTARNIVDTTAPYELVSRMRASFWVIGPLLARMGEANVSLPGGCAIGTRPVDLLLDALLALGAEIDIENGYAKAKARNGLVGARYKFPKVSVGATHVMLMAATLAKGETIIENAAREPEVANLADCLNAMGAKISGAGSSTIHVQGVTNLSGARVRIIPDRIEAGTYAMAVAMTGGDVLLEGAQESQLSCVLETLRQAGAEINETNSGLRVVRNGHGIQPVDITTDPFPGFPTDLQAQFMGLMTRAKGTSHITETIFENRFMHVQELARLGAKISLSGQTATVEGVERLKGAQVMATDLRASVSLVIAGLAAEGETIVNRVYHLDRGFERLEEKLSRCGADVKRISG</sequence>